<name>ADHX_RABIT</name>
<organism>
    <name type="scientific">Oryctolagus cuniculus</name>
    <name type="common">Rabbit</name>
    <dbReference type="NCBI Taxonomy" id="9986"/>
    <lineage>
        <taxon>Eukaryota</taxon>
        <taxon>Metazoa</taxon>
        <taxon>Chordata</taxon>
        <taxon>Craniata</taxon>
        <taxon>Vertebrata</taxon>
        <taxon>Euteleostomi</taxon>
        <taxon>Mammalia</taxon>
        <taxon>Eutheria</taxon>
        <taxon>Euarchontoglires</taxon>
        <taxon>Glires</taxon>
        <taxon>Lagomorpha</taxon>
        <taxon>Leporidae</taxon>
        <taxon>Oryctolagus</taxon>
    </lineage>
</organism>
<accession>O19053</accession>
<reference key="1">
    <citation type="journal article" date="1998" name="Eur. J. Biochem.">
        <title>Structural and functional divergence of class II alcohol dehydrogenase -- cloning and characterisation of rabbit liver isoforms of the enzyme.</title>
        <authorList>
            <person name="Svensson S."/>
            <person name="Hedberg J."/>
            <person name="Hoeoeg J.-O."/>
        </authorList>
    </citation>
    <scope>NUCLEOTIDE SEQUENCE [MRNA]</scope>
    <source>
        <strain>New Zealand white</strain>
        <tissue>Liver</tissue>
    </source>
</reference>
<protein>
    <recommendedName>
        <fullName evidence="1">Alcohol dehydrogenase class-3</fullName>
        <ecNumber evidence="1">1.1.1.1</ecNumber>
    </recommendedName>
    <alternativeName>
        <fullName>Alcohol dehydrogenase 5</fullName>
    </alternativeName>
    <alternativeName>
        <fullName>Alcohol dehydrogenase class-III</fullName>
    </alternativeName>
    <alternativeName>
        <fullName>Glutathione-dependent formaldehyde dehydrogenase</fullName>
        <shortName>FALDH</shortName>
        <shortName>FDH</shortName>
        <shortName>GSH-FDH</shortName>
        <ecNumber>1.1.1.-</ecNumber>
    </alternativeName>
    <alternativeName>
        <fullName>S-(hydroxymethyl)glutathione dehydrogenase</fullName>
        <ecNumber evidence="1">1.1.1.284</ecNumber>
    </alternativeName>
</protein>
<gene>
    <name evidence="1" type="primary">ADH5</name>
    <name type="synonym">ADH3</name>
</gene>
<keyword id="KW-0007">Acetylation</keyword>
<keyword id="KW-0963">Cytoplasm</keyword>
<keyword id="KW-0443">Lipid metabolism</keyword>
<keyword id="KW-0479">Metal-binding</keyword>
<keyword id="KW-0520">NAD</keyword>
<keyword id="KW-0560">Oxidoreductase</keyword>
<keyword id="KW-0597">Phosphoprotein</keyword>
<keyword id="KW-1185">Reference proteome</keyword>
<keyword id="KW-0862">Zinc</keyword>
<dbReference type="EC" id="1.1.1.1" evidence="1"/>
<dbReference type="EC" id="1.1.1.-"/>
<dbReference type="EC" id="1.1.1.284" evidence="1"/>
<dbReference type="EMBL" id="Y15406">
    <property type="protein sequence ID" value="CAA75606.1"/>
    <property type="molecule type" value="mRNA"/>
</dbReference>
<dbReference type="RefSeq" id="NP_001076093.1">
    <property type="nucleotide sequence ID" value="NM_001082624.1"/>
</dbReference>
<dbReference type="SMR" id="O19053"/>
<dbReference type="FunCoup" id="O19053">
    <property type="interactions" value="2110"/>
</dbReference>
<dbReference type="STRING" id="9986.ENSOCUP00000038144"/>
<dbReference type="PaxDb" id="9986-ENSOCUP00000003687"/>
<dbReference type="GeneID" id="100009307"/>
<dbReference type="KEGG" id="ocu:100009307"/>
<dbReference type="CTD" id="128"/>
<dbReference type="eggNOG" id="KOG0022">
    <property type="taxonomic scope" value="Eukaryota"/>
</dbReference>
<dbReference type="InParanoid" id="O19053"/>
<dbReference type="OrthoDB" id="417550at2759"/>
<dbReference type="SABIO-RK" id="O19053"/>
<dbReference type="Proteomes" id="UP000001811">
    <property type="component" value="Unplaced"/>
</dbReference>
<dbReference type="GO" id="GO:0005829">
    <property type="term" value="C:cytosol"/>
    <property type="evidence" value="ECO:0007669"/>
    <property type="project" value="TreeGrafter"/>
</dbReference>
<dbReference type="GO" id="GO:0004022">
    <property type="term" value="F:alcohol dehydrogenase (NAD+) activity"/>
    <property type="evidence" value="ECO:0007669"/>
    <property type="project" value="UniProtKB-EC"/>
</dbReference>
<dbReference type="GO" id="GO:0106322">
    <property type="term" value="F:S-(hydroxymethyl)glutathione dehydrogenase (NAD+) activity"/>
    <property type="evidence" value="ECO:0007669"/>
    <property type="project" value="RHEA"/>
</dbReference>
<dbReference type="GO" id="GO:0106321">
    <property type="term" value="F:S-(hydroxymethyl)glutathione dehydrogenase (NADP+) activity"/>
    <property type="evidence" value="ECO:0007669"/>
    <property type="project" value="RHEA"/>
</dbReference>
<dbReference type="GO" id="GO:0080007">
    <property type="term" value="F:S-nitrosoglutathione reductase (NADH) activity"/>
    <property type="evidence" value="ECO:0007669"/>
    <property type="project" value="RHEA"/>
</dbReference>
<dbReference type="GO" id="GO:0008270">
    <property type="term" value="F:zinc ion binding"/>
    <property type="evidence" value="ECO:0007669"/>
    <property type="project" value="InterPro"/>
</dbReference>
<dbReference type="GO" id="GO:0010430">
    <property type="term" value="P:fatty acid omega-oxidation"/>
    <property type="evidence" value="ECO:0000250"/>
    <property type="project" value="UniProtKB"/>
</dbReference>
<dbReference type="GO" id="GO:0046294">
    <property type="term" value="P:formaldehyde catabolic process"/>
    <property type="evidence" value="ECO:0007669"/>
    <property type="project" value="InterPro"/>
</dbReference>
<dbReference type="CDD" id="cd08300">
    <property type="entry name" value="alcohol_DH_class_III"/>
    <property type="match status" value="1"/>
</dbReference>
<dbReference type="FunFam" id="3.40.50.720:FF:000003">
    <property type="entry name" value="S-(hydroxymethyl)glutathione dehydrogenase"/>
    <property type="match status" value="1"/>
</dbReference>
<dbReference type="FunFam" id="3.90.180.10:FF:000001">
    <property type="entry name" value="S-(hydroxymethyl)glutathione dehydrogenase"/>
    <property type="match status" value="1"/>
</dbReference>
<dbReference type="Gene3D" id="3.90.180.10">
    <property type="entry name" value="Medium-chain alcohol dehydrogenases, catalytic domain"/>
    <property type="match status" value="1"/>
</dbReference>
<dbReference type="Gene3D" id="3.40.50.720">
    <property type="entry name" value="NAD(P)-binding Rossmann-like Domain"/>
    <property type="match status" value="1"/>
</dbReference>
<dbReference type="InterPro" id="IPR013149">
    <property type="entry name" value="ADH-like_C"/>
</dbReference>
<dbReference type="InterPro" id="IPR013154">
    <property type="entry name" value="ADH-like_N"/>
</dbReference>
<dbReference type="InterPro" id="IPR014183">
    <property type="entry name" value="ADH_3"/>
</dbReference>
<dbReference type="InterPro" id="IPR002328">
    <property type="entry name" value="ADH_Zn_CS"/>
</dbReference>
<dbReference type="InterPro" id="IPR011032">
    <property type="entry name" value="GroES-like_sf"/>
</dbReference>
<dbReference type="InterPro" id="IPR036291">
    <property type="entry name" value="NAD(P)-bd_dom_sf"/>
</dbReference>
<dbReference type="InterPro" id="IPR020843">
    <property type="entry name" value="PKS_ER"/>
</dbReference>
<dbReference type="NCBIfam" id="TIGR02818">
    <property type="entry name" value="adh_III_F_hyde"/>
    <property type="match status" value="1"/>
</dbReference>
<dbReference type="PANTHER" id="PTHR43880">
    <property type="entry name" value="ALCOHOL DEHYDROGENASE"/>
    <property type="match status" value="1"/>
</dbReference>
<dbReference type="PANTHER" id="PTHR43880:SF4">
    <property type="entry name" value="ALCOHOL DEHYDROGENASE CLASS-3"/>
    <property type="match status" value="1"/>
</dbReference>
<dbReference type="Pfam" id="PF08240">
    <property type="entry name" value="ADH_N"/>
    <property type="match status" value="1"/>
</dbReference>
<dbReference type="Pfam" id="PF00107">
    <property type="entry name" value="ADH_zinc_N"/>
    <property type="match status" value="1"/>
</dbReference>
<dbReference type="SMART" id="SM00829">
    <property type="entry name" value="PKS_ER"/>
    <property type="match status" value="1"/>
</dbReference>
<dbReference type="SUPFAM" id="SSF50129">
    <property type="entry name" value="GroES-like"/>
    <property type="match status" value="2"/>
</dbReference>
<dbReference type="SUPFAM" id="SSF51735">
    <property type="entry name" value="NAD(P)-binding Rossmann-fold domains"/>
    <property type="match status" value="1"/>
</dbReference>
<dbReference type="PROSITE" id="PS00059">
    <property type="entry name" value="ADH_ZINC"/>
    <property type="match status" value="1"/>
</dbReference>
<evidence type="ECO:0000250" key="1">
    <source>
        <dbReference type="UniProtKB" id="P11766"/>
    </source>
</evidence>
<evidence type="ECO:0000250" key="2">
    <source>
        <dbReference type="UniProtKB" id="P28474"/>
    </source>
</evidence>
<evidence type="ECO:0000305" key="3"/>
<feature type="initiator methionine" description="Removed" evidence="1">
    <location>
        <position position="1"/>
    </location>
</feature>
<feature type="chain" id="PRO_0000160761" description="Alcohol dehydrogenase class-3">
    <location>
        <begin position="2"/>
        <end position="374"/>
    </location>
</feature>
<feature type="binding site" evidence="1">
    <location>
        <position position="45"/>
    </location>
    <ligand>
        <name>Zn(2+)</name>
        <dbReference type="ChEBI" id="CHEBI:29105"/>
        <label>1</label>
        <note>catalytic</note>
    </ligand>
</feature>
<feature type="binding site" evidence="1">
    <location>
        <position position="67"/>
    </location>
    <ligand>
        <name>Zn(2+)</name>
        <dbReference type="ChEBI" id="CHEBI:29105"/>
        <label>1</label>
        <note>catalytic</note>
    </ligand>
</feature>
<feature type="binding site" evidence="1">
    <location>
        <position position="97"/>
    </location>
    <ligand>
        <name>Zn(2+)</name>
        <dbReference type="ChEBI" id="CHEBI:29105"/>
        <label>2</label>
    </ligand>
</feature>
<feature type="binding site" evidence="1">
    <location>
        <position position="100"/>
    </location>
    <ligand>
        <name>Zn(2+)</name>
        <dbReference type="ChEBI" id="CHEBI:29105"/>
        <label>2</label>
    </ligand>
</feature>
<feature type="binding site" evidence="1">
    <location>
        <position position="103"/>
    </location>
    <ligand>
        <name>Zn(2+)</name>
        <dbReference type="ChEBI" id="CHEBI:29105"/>
        <label>2</label>
    </ligand>
</feature>
<feature type="binding site" evidence="1">
    <location>
        <position position="111"/>
    </location>
    <ligand>
        <name>Zn(2+)</name>
        <dbReference type="ChEBI" id="CHEBI:29105"/>
        <label>2</label>
    </ligand>
</feature>
<feature type="binding site" evidence="1">
    <location>
        <position position="174"/>
    </location>
    <ligand>
        <name>Zn(2+)</name>
        <dbReference type="ChEBI" id="CHEBI:29105"/>
        <label>1</label>
        <note>catalytic</note>
    </ligand>
</feature>
<feature type="site" description="Important for FDH activity and activation by fatty acids" evidence="1">
    <location>
        <position position="115"/>
    </location>
</feature>
<feature type="modified residue" description="N-acetylalanine" evidence="1">
    <location>
        <position position="2"/>
    </location>
</feature>
<feature type="modified residue" description="N6-succinyllysine" evidence="2">
    <location>
        <position position="233"/>
    </location>
</feature>
<feature type="modified residue" description="Phosphoserine" evidence="1">
    <location>
        <position position="247"/>
    </location>
</feature>
<feature type="modified residue" description="N6-succinyllysine" evidence="2">
    <location>
        <position position="315"/>
    </location>
</feature>
<feature type="modified residue" description="Phosphoserine" evidence="1">
    <location>
        <position position="324"/>
    </location>
</feature>
<feature type="modified residue" description="Phosphoserine" evidence="1">
    <location>
        <position position="351"/>
    </location>
</feature>
<proteinExistence type="evidence at transcript level"/>
<sequence length="374" mass="39596">MANKVIKCKAAVAWEAGKPLSIEEIEVAPPKAHEVRIKIFATAVCHTDAYTLSGADPEGCFPVILGHEGAGIVESVGEGVTNLKAGDTVIPLYIPQCGECKFCLNPKTNLCQKIRVTQGKGLMPDGTSRFTCKGKTILHYMGTSTFSEYTVVADISVAKIDPSAPLDKVCLLGCGISTGYGAALNTAKVEPGSTCAVFGLGGVGLAAIMGCKAAGASRIIAVDINKDKFARAKEFGATECINPQDFSKPIQEVLVEKTDGGVDYSFECIGNVKVMRAALEACHKGWGVSVVVGVAGAGEEISTRPFQLVTGRTWKGTAFGGWKSVESVPKLVSEYMSKKINVDEFVTNTLSFDQINEAFELMHSGKSIRTVVKI</sequence>
<comment type="function">
    <text evidence="1 2">Catalyzes the oxidation of long-chain primary alcohols and the oxidation of S-(hydroxymethyl) glutathione. Also oxidizes long chain omega-hydroxy fatty acids, such as 20-HETE, producing both the intermediate aldehyde, 20-oxoarachidonate and the end product, a dicarboxylic acid, (5Z,8Z,11Z,14Z)-eicosatetraenedioate. Class-III ADH is remarkably ineffective in oxidizing ethanol. Required for clearance of cellular formaldehyde, a cytotoxic and carcinogenic metabolite that induces DNA damage (By similarity). Also acts as a S-nitroso-glutathione reductase by catalyzing the NADH-dependent reduction of S-nitrosoglutathione, thereby regulating protein S-nitrosylation (By similarity).</text>
</comment>
<comment type="catalytic activity">
    <reaction evidence="1">
        <text>a primary alcohol + NAD(+) = an aldehyde + NADH + H(+)</text>
        <dbReference type="Rhea" id="RHEA:10736"/>
        <dbReference type="ChEBI" id="CHEBI:15378"/>
        <dbReference type="ChEBI" id="CHEBI:15734"/>
        <dbReference type="ChEBI" id="CHEBI:17478"/>
        <dbReference type="ChEBI" id="CHEBI:57540"/>
        <dbReference type="ChEBI" id="CHEBI:57945"/>
        <dbReference type="EC" id="1.1.1.1"/>
    </reaction>
</comment>
<comment type="catalytic activity">
    <reaction evidence="1">
        <text>a secondary alcohol + NAD(+) = a ketone + NADH + H(+)</text>
        <dbReference type="Rhea" id="RHEA:10740"/>
        <dbReference type="ChEBI" id="CHEBI:15378"/>
        <dbReference type="ChEBI" id="CHEBI:17087"/>
        <dbReference type="ChEBI" id="CHEBI:35681"/>
        <dbReference type="ChEBI" id="CHEBI:57540"/>
        <dbReference type="ChEBI" id="CHEBI:57945"/>
        <dbReference type="EC" id="1.1.1.1"/>
    </reaction>
</comment>
<comment type="catalytic activity">
    <reaction evidence="1">
        <text>S-(hydroxymethyl)glutathione + NADP(+) = S-formylglutathione + NADPH + H(+)</text>
        <dbReference type="Rhea" id="RHEA:19981"/>
        <dbReference type="ChEBI" id="CHEBI:15378"/>
        <dbReference type="ChEBI" id="CHEBI:57688"/>
        <dbReference type="ChEBI" id="CHEBI:57783"/>
        <dbReference type="ChEBI" id="CHEBI:58349"/>
        <dbReference type="ChEBI" id="CHEBI:58758"/>
        <dbReference type="EC" id="1.1.1.284"/>
    </reaction>
</comment>
<comment type="catalytic activity">
    <reaction evidence="1">
        <text>S-(hydroxymethyl)glutathione + NAD(+) = S-formylglutathione + NADH + H(+)</text>
        <dbReference type="Rhea" id="RHEA:19985"/>
        <dbReference type="ChEBI" id="CHEBI:15378"/>
        <dbReference type="ChEBI" id="CHEBI:57540"/>
        <dbReference type="ChEBI" id="CHEBI:57688"/>
        <dbReference type="ChEBI" id="CHEBI:57945"/>
        <dbReference type="ChEBI" id="CHEBI:58758"/>
        <dbReference type="EC" id="1.1.1.284"/>
    </reaction>
</comment>
<comment type="catalytic activity">
    <reaction evidence="1">
        <text>20-oxo-(5Z,8Z,11Z,14Z)-eicosatetraenoate + NAD(+) + H2O = (5Z,8Z,11Z,14Z)-eicosatetraenedioate + NADH + 2 H(+)</text>
        <dbReference type="Rhea" id="RHEA:39803"/>
        <dbReference type="ChEBI" id="CHEBI:15377"/>
        <dbReference type="ChEBI" id="CHEBI:15378"/>
        <dbReference type="ChEBI" id="CHEBI:57540"/>
        <dbReference type="ChEBI" id="CHEBI:57945"/>
        <dbReference type="ChEBI" id="CHEBI:76645"/>
        <dbReference type="ChEBI" id="CHEBI:76647"/>
    </reaction>
    <physiologicalReaction direction="left-to-right" evidence="1">
        <dbReference type="Rhea" id="RHEA:39804"/>
    </physiologicalReaction>
</comment>
<comment type="catalytic activity">
    <reaction evidence="1">
        <text>20-hydroxy-(5Z,8Z,11Z,14Z)-eicosatetraenoate + NAD(+) = 20-oxo-(5Z,8Z,11Z,14Z)-eicosatetraenoate + NADH + H(+)</text>
        <dbReference type="Rhea" id="RHEA:39799"/>
        <dbReference type="ChEBI" id="CHEBI:15378"/>
        <dbReference type="ChEBI" id="CHEBI:57540"/>
        <dbReference type="ChEBI" id="CHEBI:57945"/>
        <dbReference type="ChEBI" id="CHEBI:76624"/>
        <dbReference type="ChEBI" id="CHEBI:76645"/>
    </reaction>
    <physiologicalReaction direction="left-to-right" evidence="1">
        <dbReference type="Rhea" id="RHEA:39800"/>
    </physiologicalReaction>
</comment>
<comment type="catalytic activity">
    <reaction evidence="2">
        <text>S-nitrosoglutathione + NADH + H(+) = S-(hydroxysulfenamide)glutathione + NAD(+)</text>
        <dbReference type="Rhea" id="RHEA:78371"/>
        <dbReference type="ChEBI" id="CHEBI:15378"/>
        <dbReference type="ChEBI" id="CHEBI:57540"/>
        <dbReference type="ChEBI" id="CHEBI:57945"/>
        <dbReference type="ChEBI" id="CHEBI:145544"/>
        <dbReference type="ChEBI" id="CHEBI:229723"/>
    </reaction>
    <physiologicalReaction direction="left-to-right" evidence="2">
        <dbReference type="Rhea" id="RHEA:78372"/>
    </physiologicalReaction>
</comment>
<comment type="cofactor">
    <cofactor evidence="1">
        <name>Zn(2+)</name>
        <dbReference type="ChEBI" id="CHEBI:29105"/>
    </cofactor>
    <text evidence="1">Binds 2 Zn(2+) ions per subunit.</text>
</comment>
<comment type="subunit">
    <text evidence="1">Homodimer.</text>
</comment>
<comment type="subcellular location">
    <subcellularLocation>
        <location evidence="3">Cytoplasm</location>
    </subcellularLocation>
</comment>
<comment type="similarity">
    <text evidence="3">Belongs to the zinc-containing alcohol dehydrogenase family. Class-III subfamily.</text>
</comment>